<evidence type="ECO:0000255" key="1">
    <source>
        <dbReference type="HAMAP-Rule" id="MF_00624"/>
    </source>
</evidence>
<proteinExistence type="inferred from homology"/>
<sequence length="418" mass="46621">METKRLTQRSMVFVLAGGRGSRLKELTDRRVKPAVPFGGKARIIDFALSNALNSGIRKMAIATQYKAHSLIRHLQRGWTFFRAERNEFLDILPASQRTGTEAWYAGTADAVTQNIDIVDSYDVDYVIILAGDHIYKMDYEVMLREHVETGADVTVGCLTVPRMEATAFGVMATDETGKITSFLEKPADPPAMPDDPNSALASMGIYVFKWSFLRELLVADALDTNSSHDFGHDLIPEIVENGKAMAHRYDRSCVRADGAPVYWKDVGTVDAFWEAHIDLTNFTPDLDLWDKNWPIWTYSESVPPAKFIHDERDRRGMAISSMVAGGCIISGTEVRNSCLFTGVHTNSYAVLDHAVVLPNVVVNRHARLRKVVVDSDVVVPEGLVVGEDPTEDAKWFRVSERGVTLITQDMLDKRAQAQ</sequence>
<protein>
    <recommendedName>
        <fullName evidence="1">Glucose-1-phosphate adenylyltransferase</fullName>
        <ecNumber evidence="1">2.7.7.27</ecNumber>
    </recommendedName>
    <alternativeName>
        <fullName evidence="1">ADP-glucose pyrophosphorylase</fullName>
        <shortName evidence="1">ADPGlc PPase</shortName>
    </alternativeName>
    <alternativeName>
        <fullName evidence="1">ADP-glucose synthase</fullName>
    </alternativeName>
</protein>
<accession>Q28MN1</accession>
<organism>
    <name type="scientific">Jannaschia sp. (strain CCS1)</name>
    <dbReference type="NCBI Taxonomy" id="290400"/>
    <lineage>
        <taxon>Bacteria</taxon>
        <taxon>Pseudomonadati</taxon>
        <taxon>Pseudomonadota</taxon>
        <taxon>Alphaproteobacteria</taxon>
        <taxon>Rhodobacterales</taxon>
        <taxon>Roseobacteraceae</taxon>
        <taxon>Jannaschia</taxon>
    </lineage>
</organism>
<feature type="chain" id="PRO_0000261876" description="Glucose-1-phosphate adenylyltransferase">
    <location>
        <begin position="1"/>
        <end position="418"/>
    </location>
</feature>
<feature type="binding site" evidence="1">
    <location>
        <position position="104"/>
    </location>
    <ligand>
        <name>alpha-D-glucose 1-phosphate</name>
        <dbReference type="ChEBI" id="CHEBI:58601"/>
    </ligand>
</feature>
<feature type="binding site" evidence="1">
    <location>
        <position position="169"/>
    </location>
    <ligand>
        <name>alpha-D-glucose 1-phosphate</name>
        <dbReference type="ChEBI" id="CHEBI:58601"/>
    </ligand>
</feature>
<feature type="binding site" evidence="1">
    <location>
        <begin position="184"/>
        <end position="185"/>
    </location>
    <ligand>
        <name>alpha-D-glucose 1-phosphate</name>
        <dbReference type="ChEBI" id="CHEBI:58601"/>
    </ligand>
</feature>
<feature type="binding site" evidence="1">
    <location>
        <position position="202"/>
    </location>
    <ligand>
        <name>alpha-D-glucose 1-phosphate</name>
        <dbReference type="ChEBI" id="CHEBI:58601"/>
    </ligand>
</feature>
<keyword id="KW-0067">ATP-binding</keyword>
<keyword id="KW-0119">Carbohydrate metabolism</keyword>
<keyword id="KW-0320">Glycogen biosynthesis</keyword>
<keyword id="KW-0321">Glycogen metabolism</keyword>
<keyword id="KW-0547">Nucleotide-binding</keyword>
<keyword id="KW-0548">Nucleotidyltransferase</keyword>
<keyword id="KW-1185">Reference proteome</keyword>
<keyword id="KW-0808">Transferase</keyword>
<dbReference type="EC" id="2.7.7.27" evidence="1"/>
<dbReference type="EMBL" id="CP000264">
    <property type="protein sequence ID" value="ABD56031.1"/>
    <property type="molecule type" value="Genomic_DNA"/>
</dbReference>
<dbReference type="RefSeq" id="WP_011456235.1">
    <property type="nucleotide sequence ID" value="NC_007802.1"/>
</dbReference>
<dbReference type="SMR" id="Q28MN1"/>
<dbReference type="STRING" id="290400.Jann_3114"/>
<dbReference type="KEGG" id="jan:Jann_3114"/>
<dbReference type="eggNOG" id="COG0448">
    <property type="taxonomic scope" value="Bacteria"/>
</dbReference>
<dbReference type="HOGENOM" id="CLU_029499_14_1_5"/>
<dbReference type="OrthoDB" id="9801810at2"/>
<dbReference type="UniPathway" id="UPA00164"/>
<dbReference type="Proteomes" id="UP000008326">
    <property type="component" value="Chromosome"/>
</dbReference>
<dbReference type="GO" id="GO:0005524">
    <property type="term" value="F:ATP binding"/>
    <property type="evidence" value="ECO:0007669"/>
    <property type="project" value="UniProtKB-KW"/>
</dbReference>
<dbReference type="GO" id="GO:0008878">
    <property type="term" value="F:glucose-1-phosphate adenylyltransferase activity"/>
    <property type="evidence" value="ECO:0007669"/>
    <property type="project" value="UniProtKB-UniRule"/>
</dbReference>
<dbReference type="GO" id="GO:0005978">
    <property type="term" value="P:glycogen biosynthetic process"/>
    <property type="evidence" value="ECO:0007669"/>
    <property type="project" value="UniProtKB-UniRule"/>
</dbReference>
<dbReference type="CDD" id="cd02508">
    <property type="entry name" value="ADP_Glucose_PP"/>
    <property type="match status" value="1"/>
</dbReference>
<dbReference type="CDD" id="cd04651">
    <property type="entry name" value="LbH_G1P_AT_C"/>
    <property type="match status" value="1"/>
</dbReference>
<dbReference type="Gene3D" id="2.160.10.10">
    <property type="entry name" value="Hexapeptide repeat proteins"/>
    <property type="match status" value="1"/>
</dbReference>
<dbReference type="Gene3D" id="3.90.550.10">
    <property type="entry name" value="Spore Coat Polysaccharide Biosynthesis Protein SpsA, Chain A"/>
    <property type="match status" value="1"/>
</dbReference>
<dbReference type="HAMAP" id="MF_00624">
    <property type="entry name" value="GlgC"/>
    <property type="match status" value="1"/>
</dbReference>
<dbReference type="InterPro" id="IPR011831">
    <property type="entry name" value="ADP-Glc_PPase"/>
</dbReference>
<dbReference type="InterPro" id="IPR005836">
    <property type="entry name" value="ADP_Glu_pyroP_CS"/>
</dbReference>
<dbReference type="InterPro" id="IPR023049">
    <property type="entry name" value="GlgC_bac"/>
</dbReference>
<dbReference type="InterPro" id="IPR056818">
    <property type="entry name" value="GlmU/GlgC-like_hexapep"/>
</dbReference>
<dbReference type="InterPro" id="IPR005835">
    <property type="entry name" value="NTP_transferase_dom"/>
</dbReference>
<dbReference type="InterPro" id="IPR029044">
    <property type="entry name" value="Nucleotide-diphossugar_trans"/>
</dbReference>
<dbReference type="InterPro" id="IPR011004">
    <property type="entry name" value="Trimer_LpxA-like_sf"/>
</dbReference>
<dbReference type="NCBIfam" id="TIGR02091">
    <property type="entry name" value="glgC"/>
    <property type="match status" value="1"/>
</dbReference>
<dbReference type="NCBIfam" id="NF001947">
    <property type="entry name" value="PRK00725.1"/>
    <property type="match status" value="1"/>
</dbReference>
<dbReference type="NCBIfam" id="NF002023">
    <property type="entry name" value="PRK00844.1"/>
    <property type="match status" value="1"/>
</dbReference>
<dbReference type="PANTHER" id="PTHR43523:SF2">
    <property type="entry name" value="GLUCOSE-1-PHOSPHATE ADENYLYLTRANSFERASE"/>
    <property type="match status" value="1"/>
</dbReference>
<dbReference type="PANTHER" id="PTHR43523">
    <property type="entry name" value="GLUCOSE-1-PHOSPHATE ADENYLYLTRANSFERASE-RELATED"/>
    <property type="match status" value="1"/>
</dbReference>
<dbReference type="Pfam" id="PF24894">
    <property type="entry name" value="Hexapep_GlmU"/>
    <property type="match status" value="1"/>
</dbReference>
<dbReference type="Pfam" id="PF00483">
    <property type="entry name" value="NTP_transferase"/>
    <property type="match status" value="1"/>
</dbReference>
<dbReference type="SUPFAM" id="SSF53448">
    <property type="entry name" value="Nucleotide-diphospho-sugar transferases"/>
    <property type="match status" value="1"/>
</dbReference>
<dbReference type="SUPFAM" id="SSF51161">
    <property type="entry name" value="Trimeric LpxA-like enzymes"/>
    <property type="match status" value="1"/>
</dbReference>
<dbReference type="PROSITE" id="PS00809">
    <property type="entry name" value="ADP_GLC_PYROPHOSPH_2"/>
    <property type="match status" value="1"/>
</dbReference>
<dbReference type="PROSITE" id="PS00810">
    <property type="entry name" value="ADP_GLC_PYROPHOSPH_3"/>
    <property type="match status" value="1"/>
</dbReference>
<reference key="1">
    <citation type="submission" date="2006-02" db="EMBL/GenBank/DDBJ databases">
        <title>Complete sequence of chromosome of Jannaschia sp. CCS1.</title>
        <authorList>
            <consortium name="US DOE Joint Genome Institute"/>
            <person name="Copeland A."/>
            <person name="Lucas S."/>
            <person name="Lapidus A."/>
            <person name="Barry K."/>
            <person name="Detter J.C."/>
            <person name="Glavina del Rio T."/>
            <person name="Hammon N."/>
            <person name="Israni S."/>
            <person name="Pitluck S."/>
            <person name="Brettin T."/>
            <person name="Bruce D."/>
            <person name="Han C."/>
            <person name="Tapia R."/>
            <person name="Gilna P."/>
            <person name="Chertkov O."/>
            <person name="Saunders E."/>
            <person name="Schmutz J."/>
            <person name="Larimer F."/>
            <person name="Land M."/>
            <person name="Kyrpides N."/>
            <person name="Lykidis A."/>
            <person name="Moran M.A."/>
            <person name="Belas R."/>
            <person name="Ye W."/>
            <person name="Buchan A."/>
            <person name="Gonzalez J.M."/>
            <person name="Schell M.A."/>
            <person name="Richardson P."/>
        </authorList>
    </citation>
    <scope>NUCLEOTIDE SEQUENCE [LARGE SCALE GENOMIC DNA]</scope>
    <source>
        <strain>CCS1</strain>
    </source>
</reference>
<gene>
    <name evidence="1" type="primary">glgC</name>
    <name type="ordered locus">Jann_3114</name>
</gene>
<name>GLGC_JANSC</name>
<comment type="function">
    <text evidence="1">Involved in the biosynthesis of ADP-glucose, a building block required for the elongation reactions to produce glycogen. Catalyzes the reaction between ATP and alpha-D-glucose 1-phosphate (G1P) to produce pyrophosphate and ADP-Glc.</text>
</comment>
<comment type="catalytic activity">
    <reaction evidence="1">
        <text>alpha-D-glucose 1-phosphate + ATP + H(+) = ADP-alpha-D-glucose + diphosphate</text>
        <dbReference type="Rhea" id="RHEA:12120"/>
        <dbReference type="ChEBI" id="CHEBI:15378"/>
        <dbReference type="ChEBI" id="CHEBI:30616"/>
        <dbReference type="ChEBI" id="CHEBI:33019"/>
        <dbReference type="ChEBI" id="CHEBI:57498"/>
        <dbReference type="ChEBI" id="CHEBI:58601"/>
        <dbReference type="EC" id="2.7.7.27"/>
    </reaction>
</comment>
<comment type="pathway">
    <text evidence="1">Glycan biosynthesis; glycogen biosynthesis.</text>
</comment>
<comment type="subunit">
    <text evidence="1">Homotetramer.</text>
</comment>
<comment type="similarity">
    <text evidence="1">Belongs to the bacterial/plant glucose-1-phosphate adenylyltransferase family.</text>
</comment>